<accession>B3EJK9</accession>
<name>ATPB_CHLPB</name>
<dbReference type="EC" id="7.1.2.2" evidence="1"/>
<dbReference type="EMBL" id="CP001101">
    <property type="protein sequence ID" value="ACE03020.1"/>
    <property type="molecule type" value="Genomic_DNA"/>
</dbReference>
<dbReference type="SMR" id="B3EJK9"/>
<dbReference type="STRING" id="331678.Cphamn1_0031"/>
<dbReference type="KEGG" id="cpb:Cphamn1_0031"/>
<dbReference type="eggNOG" id="COG0055">
    <property type="taxonomic scope" value="Bacteria"/>
</dbReference>
<dbReference type="HOGENOM" id="CLU_022398_0_2_10"/>
<dbReference type="OrthoDB" id="9801639at2"/>
<dbReference type="GO" id="GO:0005886">
    <property type="term" value="C:plasma membrane"/>
    <property type="evidence" value="ECO:0007669"/>
    <property type="project" value="UniProtKB-SubCell"/>
</dbReference>
<dbReference type="GO" id="GO:0045259">
    <property type="term" value="C:proton-transporting ATP synthase complex"/>
    <property type="evidence" value="ECO:0007669"/>
    <property type="project" value="UniProtKB-KW"/>
</dbReference>
<dbReference type="GO" id="GO:0005524">
    <property type="term" value="F:ATP binding"/>
    <property type="evidence" value="ECO:0007669"/>
    <property type="project" value="UniProtKB-UniRule"/>
</dbReference>
<dbReference type="GO" id="GO:0016887">
    <property type="term" value="F:ATP hydrolysis activity"/>
    <property type="evidence" value="ECO:0007669"/>
    <property type="project" value="InterPro"/>
</dbReference>
<dbReference type="GO" id="GO:0046933">
    <property type="term" value="F:proton-transporting ATP synthase activity, rotational mechanism"/>
    <property type="evidence" value="ECO:0007669"/>
    <property type="project" value="UniProtKB-UniRule"/>
</dbReference>
<dbReference type="CDD" id="cd18110">
    <property type="entry name" value="ATP-synt_F1_beta_C"/>
    <property type="match status" value="1"/>
</dbReference>
<dbReference type="CDD" id="cd18115">
    <property type="entry name" value="ATP-synt_F1_beta_N"/>
    <property type="match status" value="1"/>
</dbReference>
<dbReference type="CDD" id="cd01133">
    <property type="entry name" value="F1-ATPase_beta_CD"/>
    <property type="match status" value="1"/>
</dbReference>
<dbReference type="FunFam" id="1.10.1140.10:FF:000001">
    <property type="entry name" value="ATP synthase subunit beta"/>
    <property type="match status" value="1"/>
</dbReference>
<dbReference type="FunFam" id="2.40.10.170:FF:000005">
    <property type="entry name" value="ATP synthase subunit beta"/>
    <property type="match status" value="1"/>
</dbReference>
<dbReference type="FunFam" id="3.40.50.300:FF:000026">
    <property type="entry name" value="ATP synthase subunit beta"/>
    <property type="match status" value="1"/>
</dbReference>
<dbReference type="Gene3D" id="2.40.10.170">
    <property type="match status" value="1"/>
</dbReference>
<dbReference type="Gene3D" id="1.10.1140.10">
    <property type="entry name" value="Bovine Mitochondrial F1-atpase, Atp Synthase Beta Chain, Chain D, domain 3"/>
    <property type="match status" value="1"/>
</dbReference>
<dbReference type="Gene3D" id="3.40.50.300">
    <property type="entry name" value="P-loop containing nucleotide triphosphate hydrolases"/>
    <property type="match status" value="1"/>
</dbReference>
<dbReference type="HAMAP" id="MF_01347">
    <property type="entry name" value="ATP_synth_beta_bact"/>
    <property type="match status" value="1"/>
</dbReference>
<dbReference type="InterPro" id="IPR003593">
    <property type="entry name" value="AAA+_ATPase"/>
</dbReference>
<dbReference type="InterPro" id="IPR055190">
    <property type="entry name" value="ATP-synt_VA_C"/>
</dbReference>
<dbReference type="InterPro" id="IPR005722">
    <property type="entry name" value="ATP_synth_F1_bsu"/>
</dbReference>
<dbReference type="InterPro" id="IPR020003">
    <property type="entry name" value="ATPase_a/bsu_AS"/>
</dbReference>
<dbReference type="InterPro" id="IPR050053">
    <property type="entry name" value="ATPase_alpha/beta_chains"/>
</dbReference>
<dbReference type="InterPro" id="IPR004100">
    <property type="entry name" value="ATPase_F1/V1/A1_a/bsu_N"/>
</dbReference>
<dbReference type="InterPro" id="IPR036121">
    <property type="entry name" value="ATPase_F1/V1/A1_a/bsu_N_sf"/>
</dbReference>
<dbReference type="InterPro" id="IPR000194">
    <property type="entry name" value="ATPase_F1/V1/A1_a/bsu_nucl-bd"/>
</dbReference>
<dbReference type="InterPro" id="IPR024034">
    <property type="entry name" value="ATPase_F1/V1_b/a_C"/>
</dbReference>
<dbReference type="InterPro" id="IPR027417">
    <property type="entry name" value="P-loop_NTPase"/>
</dbReference>
<dbReference type="NCBIfam" id="TIGR01039">
    <property type="entry name" value="atpD"/>
    <property type="match status" value="1"/>
</dbReference>
<dbReference type="PANTHER" id="PTHR15184">
    <property type="entry name" value="ATP SYNTHASE"/>
    <property type="match status" value="1"/>
</dbReference>
<dbReference type="PANTHER" id="PTHR15184:SF71">
    <property type="entry name" value="ATP SYNTHASE SUBUNIT BETA, MITOCHONDRIAL"/>
    <property type="match status" value="1"/>
</dbReference>
<dbReference type="Pfam" id="PF00006">
    <property type="entry name" value="ATP-synt_ab"/>
    <property type="match status" value="1"/>
</dbReference>
<dbReference type="Pfam" id="PF02874">
    <property type="entry name" value="ATP-synt_ab_N"/>
    <property type="match status" value="1"/>
</dbReference>
<dbReference type="Pfam" id="PF22919">
    <property type="entry name" value="ATP-synt_VA_C"/>
    <property type="match status" value="1"/>
</dbReference>
<dbReference type="PIRSF" id="PIRSF039072">
    <property type="entry name" value="ATPase_subunit_beta"/>
    <property type="match status" value="1"/>
</dbReference>
<dbReference type="SMART" id="SM00382">
    <property type="entry name" value="AAA"/>
    <property type="match status" value="1"/>
</dbReference>
<dbReference type="SUPFAM" id="SSF47917">
    <property type="entry name" value="C-terminal domain of alpha and beta subunits of F1 ATP synthase"/>
    <property type="match status" value="1"/>
</dbReference>
<dbReference type="SUPFAM" id="SSF50615">
    <property type="entry name" value="N-terminal domain of alpha and beta subunits of F1 ATP synthase"/>
    <property type="match status" value="1"/>
</dbReference>
<dbReference type="SUPFAM" id="SSF52540">
    <property type="entry name" value="P-loop containing nucleoside triphosphate hydrolases"/>
    <property type="match status" value="1"/>
</dbReference>
<dbReference type="PROSITE" id="PS00152">
    <property type="entry name" value="ATPASE_ALPHA_BETA"/>
    <property type="match status" value="1"/>
</dbReference>
<reference key="1">
    <citation type="submission" date="2008-06" db="EMBL/GenBank/DDBJ databases">
        <title>Complete sequence of Chlorobium phaeobacteroides BS1.</title>
        <authorList>
            <consortium name="US DOE Joint Genome Institute"/>
            <person name="Lucas S."/>
            <person name="Copeland A."/>
            <person name="Lapidus A."/>
            <person name="Glavina del Rio T."/>
            <person name="Dalin E."/>
            <person name="Tice H."/>
            <person name="Bruce D."/>
            <person name="Goodwin L."/>
            <person name="Pitluck S."/>
            <person name="Schmutz J."/>
            <person name="Larimer F."/>
            <person name="Land M."/>
            <person name="Hauser L."/>
            <person name="Kyrpides N."/>
            <person name="Ovchinnikova G."/>
            <person name="Li T."/>
            <person name="Liu Z."/>
            <person name="Zhao F."/>
            <person name="Overmann J."/>
            <person name="Bryant D.A."/>
            <person name="Richardson P."/>
        </authorList>
    </citation>
    <scope>NUCLEOTIDE SEQUENCE [LARGE SCALE GENOMIC DNA]</scope>
    <source>
        <strain>BS1</strain>
    </source>
</reference>
<feature type="chain" id="PRO_1000143485" description="ATP synthase subunit beta">
    <location>
        <begin position="1"/>
        <end position="462"/>
    </location>
</feature>
<feature type="binding site" evidence="1">
    <location>
        <begin position="151"/>
        <end position="158"/>
    </location>
    <ligand>
        <name>ATP</name>
        <dbReference type="ChEBI" id="CHEBI:30616"/>
    </ligand>
</feature>
<evidence type="ECO:0000255" key="1">
    <source>
        <dbReference type="HAMAP-Rule" id="MF_01347"/>
    </source>
</evidence>
<proteinExistence type="inferred from homology"/>
<protein>
    <recommendedName>
        <fullName evidence="1">ATP synthase subunit beta</fullName>
        <ecNumber evidence="1">7.1.2.2</ecNumber>
    </recommendedName>
    <alternativeName>
        <fullName evidence="1">ATP synthase F1 sector subunit beta</fullName>
    </alternativeName>
    <alternativeName>
        <fullName evidence="1">F-ATPase subunit beta</fullName>
    </alternativeName>
</protein>
<gene>
    <name evidence="1" type="primary">atpD</name>
    <name type="ordered locus">Cphamn1_0031</name>
</gene>
<comment type="function">
    <text evidence="1">Produces ATP from ADP in the presence of a proton gradient across the membrane. The catalytic sites are hosted primarily by the beta subunits.</text>
</comment>
<comment type="catalytic activity">
    <reaction evidence="1">
        <text>ATP + H2O + 4 H(+)(in) = ADP + phosphate + 5 H(+)(out)</text>
        <dbReference type="Rhea" id="RHEA:57720"/>
        <dbReference type="ChEBI" id="CHEBI:15377"/>
        <dbReference type="ChEBI" id="CHEBI:15378"/>
        <dbReference type="ChEBI" id="CHEBI:30616"/>
        <dbReference type="ChEBI" id="CHEBI:43474"/>
        <dbReference type="ChEBI" id="CHEBI:456216"/>
        <dbReference type="EC" id="7.1.2.2"/>
    </reaction>
</comment>
<comment type="subunit">
    <text evidence="1">F-type ATPases have 2 components, CF(1) - the catalytic core - and CF(0) - the membrane proton channel. CF(1) has five subunits: alpha(3), beta(3), gamma(1), delta(1), epsilon(1). CF(0) has four main subunits: a(1), b(1), b'(1) and c(9-12).</text>
</comment>
<comment type="subcellular location">
    <subcellularLocation>
        <location evidence="1">Cell inner membrane</location>
        <topology evidence="1">Peripheral membrane protein</topology>
    </subcellularLocation>
</comment>
<comment type="similarity">
    <text evidence="1">Belongs to the ATPase alpha/beta chains family.</text>
</comment>
<sequence length="462" mass="50186">MQEGKISQIIGPVVDVDFQEGGLPAILDALTVARPDGTKLVLETQQHLGEERVRTISMDATDGLVRGMPVINTGKPIQVPVGPNVLGRMLNVVGDPIDGKGPVKSEKSYSIHRPTPKFDVLSTKSEMFETGIKVIDLLEPYSRGGKTGLFGGAGVGKTVLIMELINNIAKQQSGFSVFAGVGERTREGNDLWEEMKESGVIDKTALVFGQMNEPPGARARVALTGLSIAEYFRDEENRDVLLFIDNIFRFTQAGSEVSALLGRMPSAVGYQPTLGTEMGELQDRIVSTNKGSVTSVQAIYVPADDLTDPAPATAFTHLDATTVLSRSIAELGIYPAVDPLDSTSRILDPNIVGDEHYNTAQAVKSLLQRYKDLQDIIAILGMDELSDEDKLTVSRARKIQRFLSQPFFVAEAFTGLEGKYVKLEDTIKGFNEIIDGKHDDLPESAFYLVGTIEEAVEKAKTL</sequence>
<keyword id="KW-0066">ATP synthesis</keyword>
<keyword id="KW-0067">ATP-binding</keyword>
<keyword id="KW-0997">Cell inner membrane</keyword>
<keyword id="KW-1003">Cell membrane</keyword>
<keyword id="KW-0139">CF(1)</keyword>
<keyword id="KW-0375">Hydrogen ion transport</keyword>
<keyword id="KW-0406">Ion transport</keyword>
<keyword id="KW-0472">Membrane</keyword>
<keyword id="KW-0547">Nucleotide-binding</keyword>
<keyword id="KW-1278">Translocase</keyword>
<keyword id="KW-0813">Transport</keyword>
<organism>
    <name type="scientific">Chlorobium phaeobacteroides (strain BS1)</name>
    <dbReference type="NCBI Taxonomy" id="331678"/>
    <lineage>
        <taxon>Bacteria</taxon>
        <taxon>Pseudomonadati</taxon>
        <taxon>Chlorobiota</taxon>
        <taxon>Chlorobiia</taxon>
        <taxon>Chlorobiales</taxon>
        <taxon>Chlorobiaceae</taxon>
        <taxon>Chlorobium/Pelodictyon group</taxon>
        <taxon>Chlorobium</taxon>
    </lineage>
</organism>